<sequence>MTSLLITGYKAFEIGISTEKDMRIKIIKEAAKRDLIRFLEDGVDWLVFMGNLGFESWVLDLANELKKDYEFQTATIFLFENQGENWNEANQAKLAAFKQADFVKYAYPTYQNPSQFRDYNQFVIQNTDGAYLFYDEEQETKLKYLYQEMKKQEQYFIKKLTFDDLNEVAENFSGN</sequence>
<comment type="similarity">
    <text evidence="1">Belongs to the UPF0398 family.</text>
</comment>
<reference key="1">
    <citation type="journal article" date="2007" name="J. Bacteriol.">
        <title>Genome of the opportunistic pathogen Streptococcus sanguinis.</title>
        <authorList>
            <person name="Xu P."/>
            <person name="Alves J.M."/>
            <person name="Kitten T."/>
            <person name="Brown A."/>
            <person name="Chen Z."/>
            <person name="Ozaki L.S."/>
            <person name="Manque P."/>
            <person name="Ge X."/>
            <person name="Serrano M.G."/>
            <person name="Puiu D."/>
            <person name="Hendricks S."/>
            <person name="Wang Y."/>
            <person name="Chaplin M.D."/>
            <person name="Akan D."/>
            <person name="Paik S."/>
            <person name="Peterson D.L."/>
            <person name="Macrina F.L."/>
            <person name="Buck G.A."/>
        </authorList>
    </citation>
    <scope>NUCLEOTIDE SEQUENCE [LARGE SCALE GENOMIC DNA]</scope>
    <source>
        <strain>SK36</strain>
    </source>
</reference>
<gene>
    <name type="ordered locus">SSA_1858</name>
</gene>
<accession>A3CPY4</accession>
<evidence type="ECO:0000255" key="1">
    <source>
        <dbReference type="HAMAP-Rule" id="MF_01575"/>
    </source>
</evidence>
<proteinExistence type="inferred from homology"/>
<dbReference type="EMBL" id="CP000387">
    <property type="protein sequence ID" value="ABN45239.1"/>
    <property type="molecule type" value="Genomic_DNA"/>
</dbReference>
<dbReference type="RefSeq" id="WP_011837412.1">
    <property type="nucleotide sequence ID" value="NC_009009.1"/>
</dbReference>
<dbReference type="RefSeq" id="YP_001035789.1">
    <property type="nucleotide sequence ID" value="NC_009009.1"/>
</dbReference>
<dbReference type="SMR" id="A3CPY4"/>
<dbReference type="STRING" id="388919.SSA_1858"/>
<dbReference type="KEGG" id="ssa:SSA_1858"/>
<dbReference type="PATRIC" id="fig|388919.9.peg.1763"/>
<dbReference type="eggNOG" id="COG4474">
    <property type="taxonomic scope" value="Bacteria"/>
</dbReference>
<dbReference type="HOGENOM" id="CLU_105319_0_0_9"/>
<dbReference type="OrthoDB" id="2301957at2"/>
<dbReference type="Proteomes" id="UP000002148">
    <property type="component" value="Chromosome"/>
</dbReference>
<dbReference type="Gene3D" id="3.40.50.450">
    <property type="match status" value="1"/>
</dbReference>
<dbReference type="HAMAP" id="MF_01575">
    <property type="entry name" value="UPF0398"/>
    <property type="match status" value="1"/>
</dbReference>
<dbReference type="InterPro" id="IPR010697">
    <property type="entry name" value="YspA"/>
</dbReference>
<dbReference type="NCBIfam" id="NF010181">
    <property type="entry name" value="PRK13660.1"/>
    <property type="match status" value="1"/>
</dbReference>
<dbReference type="PANTHER" id="PTHR38440:SF1">
    <property type="entry name" value="UPF0398 PROTEIN SPR0331"/>
    <property type="match status" value="1"/>
</dbReference>
<dbReference type="PANTHER" id="PTHR38440">
    <property type="entry name" value="UPF0398 PROTEIN YPSA"/>
    <property type="match status" value="1"/>
</dbReference>
<dbReference type="Pfam" id="PF06908">
    <property type="entry name" value="YpsA"/>
    <property type="match status" value="1"/>
</dbReference>
<dbReference type="PIRSF" id="PIRSF021290">
    <property type="entry name" value="DUF1273"/>
    <property type="match status" value="1"/>
</dbReference>
<dbReference type="SUPFAM" id="SSF102405">
    <property type="entry name" value="MCP/YpsA-like"/>
    <property type="match status" value="1"/>
</dbReference>
<keyword id="KW-1185">Reference proteome</keyword>
<organism>
    <name type="scientific">Streptococcus sanguinis (strain SK36)</name>
    <dbReference type="NCBI Taxonomy" id="388919"/>
    <lineage>
        <taxon>Bacteria</taxon>
        <taxon>Bacillati</taxon>
        <taxon>Bacillota</taxon>
        <taxon>Bacilli</taxon>
        <taxon>Lactobacillales</taxon>
        <taxon>Streptococcaceae</taxon>
        <taxon>Streptococcus</taxon>
    </lineage>
</organism>
<name>Y1858_STRSV</name>
<feature type="chain" id="PRO_1000069222" description="UPF0398 protein SSA_1858">
    <location>
        <begin position="1"/>
        <end position="175"/>
    </location>
</feature>
<protein>
    <recommendedName>
        <fullName evidence="1">UPF0398 protein SSA_1858</fullName>
    </recommendedName>
</protein>